<comment type="subcellular location">
    <subcellularLocation>
        <location evidence="1">Cell membrane</location>
        <topology evidence="1">Multi-pass membrane protein</topology>
    </subcellularLocation>
</comment>
<comment type="similarity">
    <text evidence="1">Belongs to the AAE transporter (TC 2.A.81) family. YidE subfamily.</text>
</comment>
<sequence length="553" mass="58893">MSDIALTVSVLALVAVVGLWIGNIKVRGVGFGIGGVLFGGIIVGHFVDQAGVTLSGDMLHFIQEFGLILFVYTIGIQVGPGFFASLRVSGLRLNLFAVLIVIMGGLVTAILHKIFAIPLPVVLGIFSGAVTNTPALGAGQQILRDLGTPVDLVDQMGMSYAMAYPFGICGILLTMWLMRLIFRVNVEAEAQKHESSLANGHSLIQTMNIRVENPNLNNMAIQDVPILNSDKIICSRLKRDDTLMVPSPGTIIQAGDLLHLVGQSTDLHNAQLVIGKEVDTSLSTRGTDLRVERVVVTNEKVLGKRIRDLHFKERYDVVISRLNRAGVELVASSDASLQFGDILNLVGRPASIDAVANVVGNAQQKLQQVQMLPVFIGIGLGVLLGSIPLFVPGFPVALKLGLAGGPLIMALILGRIGSIGKLYWFMPPSANLALRELGIVLFLAVVGLKSGGDFVDTLTQGEGLSWIGYGIFITAIPLITVGLLARIFAKMNYLTLCGMLAGSMTDPPALAFANNLHATSGAAALSYATVYPLVMFLRIITPQLLAVIFWGMG</sequence>
<protein>
    <recommendedName>
        <fullName evidence="1">Putative transport protein YidE</fullName>
    </recommendedName>
</protein>
<name>YIDE_SALSV</name>
<keyword id="KW-1003">Cell membrane</keyword>
<keyword id="KW-0472">Membrane</keyword>
<keyword id="KW-0677">Repeat</keyword>
<keyword id="KW-0812">Transmembrane</keyword>
<keyword id="KW-1133">Transmembrane helix</keyword>
<keyword id="KW-0813">Transport</keyword>
<proteinExistence type="inferred from homology"/>
<evidence type="ECO:0000255" key="1">
    <source>
        <dbReference type="HAMAP-Rule" id="MF_01016"/>
    </source>
</evidence>
<organism>
    <name type="scientific">Salmonella schwarzengrund (strain CVM19633)</name>
    <dbReference type="NCBI Taxonomy" id="439843"/>
    <lineage>
        <taxon>Bacteria</taxon>
        <taxon>Pseudomonadati</taxon>
        <taxon>Pseudomonadota</taxon>
        <taxon>Gammaproteobacteria</taxon>
        <taxon>Enterobacterales</taxon>
        <taxon>Enterobacteriaceae</taxon>
        <taxon>Salmonella</taxon>
    </lineage>
</organism>
<reference key="1">
    <citation type="journal article" date="2011" name="J. Bacteriol.">
        <title>Comparative genomics of 28 Salmonella enterica isolates: evidence for CRISPR-mediated adaptive sublineage evolution.</title>
        <authorList>
            <person name="Fricke W.F."/>
            <person name="Mammel M.K."/>
            <person name="McDermott P.F."/>
            <person name="Tartera C."/>
            <person name="White D.G."/>
            <person name="Leclerc J.E."/>
            <person name="Ravel J."/>
            <person name="Cebula T.A."/>
        </authorList>
    </citation>
    <scope>NUCLEOTIDE SEQUENCE [LARGE SCALE GENOMIC DNA]</scope>
    <source>
        <strain>CVM19633</strain>
    </source>
</reference>
<dbReference type="EMBL" id="CP001127">
    <property type="protein sequence ID" value="ACF91917.1"/>
    <property type="molecule type" value="Genomic_DNA"/>
</dbReference>
<dbReference type="RefSeq" id="WP_001279793.1">
    <property type="nucleotide sequence ID" value="NC_011094.1"/>
</dbReference>
<dbReference type="SMR" id="B4TMX5"/>
<dbReference type="KEGG" id="sew:SeSA_A4017"/>
<dbReference type="HOGENOM" id="CLU_035023_3_1_6"/>
<dbReference type="Proteomes" id="UP000001865">
    <property type="component" value="Chromosome"/>
</dbReference>
<dbReference type="GO" id="GO:0005886">
    <property type="term" value="C:plasma membrane"/>
    <property type="evidence" value="ECO:0007669"/>
    <property type="project" value="UniProtKB-SubCell"/>
</dbReference>
<dbReference type="GO" id="GO:0008324">
    <property type="term" value="F:monoatomic cation transmembrane transporter activity"/>
    <property type="evidence" value="ECO:0007669"/>
    <property type="project" value="InterPro"/>
</dbReference>
<dbReference type="GO" id="GO:0006813">
    <property type="term" value="P:potassium ion transport"/>
    <property type="evidence" value="ECO:0007669"/>
    <property type="project" value="InterPro"/>
</dbReference>
<dbReference type="FunFam" id="3.30.70.1450:FF:000004">
    <property type="entry name" value="Putative transport protein YidE"/>
    <property type="match status" value="1"/>
</dbReference>
<dbReference type="Gene3D" id="3.30.70.1450">
    <property type="entry name" value="Regulator of K+ conductance, C-terminal domain"/>
    <property type="match status" value="2"/>
</dbReference>
<dbReference type="HAMAP" id="MF_01016">
    <property type="entry name" value="YidE"/>
    <property type="match status" value="1"/>
</dbReference>
<dbReference type="InterPro" id="IPR050144">
    <property type="entry name" value="AAE_transporter"/>
</dbReference>
<dbReference type="InterPro" id="IPR006037">
    <property type="entry name" value="RCK_C"/>
</dbReference>
<dbReference type="InterPro" id="IPR036721">
    <property type="entry name" value="RCK_C_sf"/>
</dbReference>
<dbReference type="InterPro" id="IPR023018">
    <property type="entry name" value="Transpt_YidE_put"/>
</dbReference>
<dbReference type="InterPro" id="IPR006512">
    <property type="entry name" value="YidE_YbjL"/>
</dbReference>
<dbReference type="NCBIfam" id="NF003007">
    <property type="entry name" value="PRK03818.1"/>
    <property type="match status" value="1"/>
</dbReference>
<dbReference type="NCBIfam" id="TIGR01625">
    <property type="entry name" value="YidE_YbjL_dupl"/>
    <property type="match status" value="2"/>
</dbReference>
<dbReference type="PANTHER" id="PTHR30445">
    <property type="entry name" value="K(+)_H(+) ANTIPORTER SUBUNIT KHTT"/>
    <property type="match status" value="1"/>
</dbReference>
<dbReference type="PANTHER" id="PTHR30445:SF3">
    <property type="entry name" value="TRANSPORT PROTEIN YIDE-RELATED"/>
    <property type="match status" value="1"/>
</dbReference>
<dbReference type="Pfam" id="PF06826">
    <property type="entry name" value="Asp-Al_Ex"/>
    <property type="match status" value="2"/>
</dbReference>
<dbReference type="Pfam" id="PF02080">
    <property type="entry name" value="TrkA_C"/>
    <property type="match status" value="2"/>
</dbReference>
<dbReference type="SUPFAM" id="SSF116726">
    <property type="entry name" value="TrkA C-terminal domain-like"/>
    <property type="match status" value="2"/>
</dbReference>
<dbReference type="PROSITE" id="PS51202">
    <property type="entry name" value="RCK_C"/>
    <property type="match status" value="2"/>
</dbReference>
<gene>
    <name evidence="1" type="primary">yidE</name>
    <name type="ordered locus">SeSA_A4017</name>
</gene>
<feature type="chain" id="PRO_1000135219" description="Putative transport protein YidE">
    <location>
        <begin position="1"/>
        <end position="553"/>
    </location>
</feature>
<feature type="transmembrane region" description="Helical" evidence="1">
    <location>
        <begin position="4"/>
        <end position="24"/>
    </location>
</feature>
<feature type="transmembrane region" description="Helical" evidence="1">
    <location>
        <begin position="28"/>
        <end position="48"/>
    </location>
</feature>
<feature type="transmembrane region" description="Helical" evidence="1">
    <location>
        <begin position="65"/>
        <end position="85"/>
    </location>
</feature>
<feature type="transmembrane region" description="Helical" evidence="1">
    <location>
        <begin position="95"/>
        <end position="115"/>
    </location>
</feature>
<feature type="transmembrane region" description="Helical" evidence="1">
    <location>
        <begin position="158"/>
        <end position="178"/>
    </location>
</feature>
<feature type="transmembrane region" description="Helical" evidence="1">
    <location>
        <begin position="371"/>
        <end position="391"/>
    </location>
</feature>
<feature type="transmembrane region" description="Helical" evidence="1">
    <location>
        <begin position="393"/>
        <end position="413"/>
    </location>
</feature>
<feature type="transmembrane region" description="Helical" evidence="1">
    <location>
        <begin position="437"/>
        <end position="457"/>
    </location>
</feature>
<feature type="transmembrane region" description="Helical" evidence="1">
    <location>
        <begin position="464"/>
        <end position="484"/>
    </location>
</feature>
<feature type="transmembrane region" description="Helical" evidence="1">
    <location>
        <begin position="493"/>
        <end position="513"/>
    </location>
</feature>
<feature type="transmembrane region" description="Helical" evidence="1">
    <location>
        <begin position="533"/>
        <end position="553"/>
    </location>
</feature>
<feature type="domain" description="RCK C-terminal 1" evidence="1">
    <location>
        <begin position="192"/>
        <end position="276"/>
    </location>
</feature>
<feature type="domain" description="RCK C-terminal 2" evidence="1">
    <location>
        <begin position="279"/>
        <end position="361"/>
    </location>
</feature>
<accession>B4TMX5</accession>